<keyword id="KW-0030">Aminoacyl-tRNA synthetase</keyword>
<keyword id="KW-0067">ATP-binding</keyword>
<keyword id="KW-0963">Cytoplasm</keyword>
<keyword id="KW-0436">Ligase</keyword>
<keyword id="KW-0479">Metal-binding</keyword>
<keyword id="KW-0547">Nucleotide-binding</keyword>
<keyword id="KW-0648">Protein biosynthesis</keyword>
<keyword id="KW-1185">Reference proteome</keyword>
<keyword id="KW-0694">RNA-binding</keyword>
<keyword id="KW-0820">tRNA-binding</keyword>
<keyword id="KW-0862">Zinc</keyword>
<accession>Q728R5</accession>
<name>SYT_NITV2</name>
<dbReference type="EC" id="6.1.1.3" evidence="1"/>
<dbReference type="EMBL" id="AE017285">
    <property type="protein sequence ID" value="AAS97010.1"/>
    <property type="molecule type" value="Genomic_DNA"/>
</dbReference>
<dbReference type="RefSeq" id="WP_010939808.1">
    <property type="nucleotide sequence ID" value="NC_002937.3"/>
</dbReference>
<dbReference type="RefSeq" id="YP_011750.1">
    <property type="nucleotide sequence ID" value="NC_002937.3"/>
</dbReference>
<dbReference type="SMR" id="Q728R5"/>
<dbReference type="STRING" id="882.DVU_2538"/>
<dbReference type="PaxDb" id="882-DVU_2538"/>
<dbReference type="EnsemblBacteria" id="AAS97010">
    <property type="protein sequence ID" value="AAS97010"/>
    <property type="gene ID" value="DVU_2538"/>
</dbReference>
<dbReference type="KEGG" id="dvu:DVU_2538"/>
<dbReference type="PATRIC" id="fig|882.5.peg.2296"/>
<dbReference type="eggNOG" id="COG0441">
    <property type="taxonomic scope" value="Bacteria"/>
</dbReference>
<dbReference type="HOGENOM" id="CLU_008554_0_1_7"/>
<dbReference type="OrthoDB" id="9802304at2"/>
<dbReference type="PhylomeDB" id="Q728R5"/>
<dbReference type="Proteomes" id="UP000002194">
    <property type="component" value="Chromosome"/>
</dbReference>
<dbReference type="GO" id="GO:0005829">
    <property type="term" value="C:cytosol"/>
    <property type="evidence" value="ECO:0007669"/>
    <property type="project" value="TreeGrafter"/>
</dbReference>
<dbReference type="GO" id="GO:0005524">
    <property type="term" value="F:ATP binding"/>
    <property type="evidence" value="ECO:0007669"/>
    <property type="project" value="UniProtKB-UniRule"/>
</dbReference>
<dbReference type="GO" id="GO:0046872">
    <property type="term" value="F:metal ion binding"/>
    <property type="evidence" value="ECO:0007669"/>
    <property type="project" value="UniProtKB-KW"/>
</dbReference>
<dbReference type="GO" id="GO:0004829">
    <property type="term" value="F:threonine-tRNA ligase activity"/>
    <property type="evidence" value="ECO:0007669"/>
    <property type="project" value="UniProtKB-UniRule"/>
</dbReference>
<dbReference type="GO" id="GO:0000049">
    <property type="term" value="F:tRNA binding"/>
    <property type="evidence" value="ECO:0007669"/>
    <property type="project" value="UniProtKB-KW"/>
</dbReference>
<dbReference type="GO" id="GO:0006435">
    <property type="term" value="P:threonyl-tRNA aminoacylation"/>
    <property type="evidence" value="ECO:0007669"/>
    <property type="project" value="UniProtKB-UniRule"/>
</dbReference>
<dbReference type="CDD" id="cd00860">
    <property type="entry name" value="ThrRS_anticodon"/>
    <property type="match status" value="1"/>
</dbReference>
<dbReference type="CDD" id="cd00771">
    <property type="entry name" value="ThrRS_core"/>
    <property type="match status" value="1"/>
</dbReference>
<dbReference type="FunFam" id="3.30.54.20:FF:000002">
    <property type="entry name" value="Threonine--tRNA ligase"/>
    <property type="match status" value="1"/>
</dbReference>
<dbReference type="FunFam" id="3.30.930.10:FF:000002">
    <property type="entry name" value="Threonine--tRNA ligase"/>
    <property type="match status" value="1"/>
</dbReference>
<dbReference type="FunFam" id="3.40.50.800:FF:000001">
    <property type="entry name" value="Threonine--tRNA ligase"/>
    <property type="match status" value="1"/>
</dbReference>
<dbReference type="FunFam" id="3.30.980.10:FF:000005">
    <property type="entry name" value="Threonyl-tRNA synthetase, mitochondrial"/>
    <property type="match status" value="1"/>
</dbReference>
<dbReference type="Gene3D" id="3.30.54.20">
    <property type="match status" value="1"/>
</dbReference>
<dbReference type="Gene3D" id="3.40.50.800">
    <property type="entry name" value="Anticodon-binding domain"/>
    <property type="match status" value="1"/>
</dbReference>
<dbReference type="Gene3D" id="3.30.930.10">
    <property type="entry name" value="Bira Bifunctional Protein, Domain 2"/>
    <property type="match status" value="1"/>
</dbReference>
<dbReference type="Gene3D" id="3.30.980.10">
    <property type="entry name" value="Threonyl-trna Synthetase, Chain A, domain 2"/>
    <property type="match status" value="1"/>
</dbReference>
<dbReference type="HAMAP" id="MF_00184">
    <property type="entry name" value="Thr_tRNA_synth"/>
    <property type="match status" value="1"/>
</dbReference>
<dbReference type="InterPro" id="IPR002314">
    <property type="entry name" value="aa-tRNA-synt_IIb"/>
</dbReference>
<dbReference type="InterPro" id="IPR006195">
    <property type="entry name" value="aa-tRNA-synth_II"/>
</dbReference>
<dbReference type="InterPro" id="IPR045864">
    <property type="entry name" value="aa-tRNA-synth_II/BPL/LPL"/>
</dbReference>
<dbReference type="InterPro" id="IPR004154">
    <property type="entry name" value="Anticodon-bd"/>
</dbReference>
<dbReference type="InterPro" id="IPR036621">
    <property type="entry name" value="Anticodon-bd_dom_sf"/>
</dbReference>
<dbReference type="InterPro" id="IPR004095">
    <property type="entry name" value="TGS"/>
</dbReference>
<dbReference type="InterPro" id="IPR002320">
    <property type="entry name" value="Thr-tRNA-ligase_IIa"/>
</dbReference>
<dbReference type="InterPro" id="IPR018163">
    <property type="entry name" value="Thr/Ala-tRNA-synth_IIc_edit"/>
</dbReference>
<dbReference type="InterPro" id="IPR047246">
    <property type="entry name" value="ThrRS_anticodon"/>
</dbReference>
<dbReference type="InterPro" id="IPR033728">
    <property type="entry name" value="ThrRS_core"/>
</dbReference>
<dbReference type="InterPro" id="IPR012947">
    <property type="entry name" value="tRNA_SAD"/>
</dbReference>
<dbReference type="NCBIfam" id="TIGR00418">
    <property type="entry name" value="thrS"/>
    <property type="match status" value="1"/>
</dbReference>
<dbReference type="PANTHER" id="PTHR11451:SF44">
    <property type="entry name" value="THREONINE--TRNA LIGASE, CHLOROPLASTIC_MITOCHONDRIAL 2"/>
    <property type="match status" value="1"/>
</dbReference>
<dbReference type="PANTHER" id="PTHR11451">
    <property type="entry name" value="THREONINE-TRNA LIGASE"/>
    <property type="match status" value="1"/>
</dbReference>
<dbReference type="Pfam" id="PF03129">
    <property type="entry name" value="HGTP_anticodon"/>
    <property type="match status" value="1"/>
</dbReference>
<dbReference type="Pfam" id="PF00587">
    <property type="entry name" value="tRNA-synt_2b"/>
    <property type="match status" value="1"/>
</dbReference>
<dbReference type="Pfam" id="PF07973">
    <property type="entry name" value="tRNA_SAD"/>
    <property type="match status" value="1"/>
</dbReference>
<dbReference type="PRINTS" id="PR01047">
    <property type="entry name" value="TRNASYNTHTHR"/>
</dbReference>
<dbReference type="SMART" id="SM00863">
    <property type="entry name" value="tRNA_SAD"/>
    <property type="match status" value="1"/>
</dbReference>
<dbReference type="SUPFAM" id="SSF52954">
    <property type="entry name" value="Class II aaRS ABD-related"/>
    <property type="match status" value="1"/>
</dbReference>
<dbReference type="SUPFAM" id="SSF55681">
    <property type="entry name" value="Class II aaRS and biotin synthetases"/>
    <property type="match status" value="1"/>
</dbReference>
<dbReference type="SUPFAM" id="SSF55186">
    <property type="entry name" value="ThrRS/AlaRS common domain"/>
    <property type="match status" value="1"/>
</dbReference>
<dbReference type="PROSITE" id="PS50862">
    <property type="entry name" value="AA_TRNA_LIGASE_II"/>
    <property type="match status" value="1"/>
</dbReference>
<dbReference type="PROSITE" id="PS51880">
    <property type="entry name" value="TGS"/>
    <property type="match status" value="1"/>
</dbReference>
<protein>
    <recommendedName>
        <fullName evidence="1">Threonine--tRNA ligase</fullName>
        <ecNumber evidence="1">6.1.1.3</ecNumber>
    </recommendedName>
    <alternativeName>
        <fullName evidence="1">Threonyl-tRNA synthetase</fullName>
        <shortName evidence="1">ThrRS</shortName>
    </alternativeName>
</protein>
<proteinExistence type="inferred from homology"/>
<evidence type="ECO:0000255" key="1">
    <source>
        <dbReference type="HAMAP-Rule" id="MF_00184"/>
    </source>
</evidence>
<evidence type="ECO:0000255" key="2">
    <source>
        <dbReference type="PROSITE-ProRule" id="PRU01228"/>
    </source>
</evidence>
<gene>
    <name evidence="1" type="primary">thrS</name>
    <name type="ordered locus">DVU_2538</name>
</gene>
<sequence>MNVSIEGQMLEVASGASCGDALKGALSGKKFKNVLACRLDGGLVDITATVPDGTTTIEPVYADSPEGLDLIRHSTAHIMACAVKRLFPAAKVTIGPSIDNGFYYDFDAERPFSPEDFEAIEREMQKIVDAATPFERSEMPRDEAVALFEGMGETYKVEIIRDLPNDTVSLYRCGEFVDLCRGPHIPHAGFAKAFKLMSVAGAYWRGDEKNPMLSRIYGTAFADAKTLKEHLHRIEEAKRRDHRKLGQQLDLFAFHEDVAPGMVFWHPKGMLVRTIIEDFLRKEHLKRRYDIVQGPQLLRRELWEKSGHYDNYRENMYFTEIDENAYGVKPMNCLAHMLIYRSAIRSYRDLPKRFFELGVVHRHEKSGVLHGLLRVRQFTQDDAHIICRPDQLEDEIIDVIALVRDLMNLFGFDYKVAVSTRPEKSIGSDEAWELATNALVKAVERAGIPYTINEGDGAFYGPKIDVRLMDCIGREWQCSTIQCDFTLPERFDLVYVGQDGERHRPVMVHRAILGSLERFIGVLIEQYAGAFPAWLAPVQARLLTVTDAQNEFVESARAALAKAGIRVEADVRNEKLGYKVREAQLEKIPYILVVGDKEVEAGGVNVRLRTGENLGLKSLDEVVSLLESDCQEPFKRGGMSYSFS</sequence>
<feature type="chain" id="PRO_1000058422" description="Threonine--tRNA ligase">
    <location>
        <begin position="1"/>
        <end position="644"/>
    </location>
</feature>
<feature type="domain" description="TGS" evidence="2">
    <location>
        <begin position="1"/>
        <end position="61"/>
    </location>
</feature>
<feature type="region of interest" description="Catalytic" evidence="1">
    <location>
        <begin position="241"/>
        <end position="532"/>
    </location>
</feature>
<feature type="binding site" evidence="1">
    <location>
        <position position="333"/>
    </location>
    <ligand>
        <name>Zn(2+)</name>
        <dbReference type="ChEBI" id="CHEBI:29105"/>
    </ligand>
</feature>
<feature type="binding site" evidence="1">
    <location>
        <position position="384"/>
    </location>
    <ligand>
        <name>Zn(2+)</name>
        <dbReference type="ChEBI" id="CHEBI:29105"/>
    </ligand>
</feature>
<feature type="binding site" evidence="1">
    <location>
        <position position="509"/>
    </location>
    <ligand>
        <name>Zn(2+)</name>
        <dbReference type="ChEBI" id="CHEBI:29105"/>
    </ligand>
</feature>
<reference key="1">
    <citation type="journal article" date="2004" name="Nat. Biotechnol.">
        <title>The genome sequence of the anaerobic, sulfate-reducing bacterium Desulfovibrio vulgaris Hildenborough.</title>
        <authorList>
            <person name="Heidelberg J.F."/>
            <person name="Seshadri R."/>
            <person name="Haveman S.A."/>
            <person name="Hemme C.L."/>
            <person name="Paulsen I.T."/>
            <person name="Kolonay J.F."/>
            <person name="Eisen J.A."/>
            <person name="Ward N.L."/>
            <person name="Methe B.A."/>
            <person name="Brinkac L.M."/>
            <person name="Daugherty S.C."/>
            <person name="DeBoy R.T."/>
            <person name="Dodson R.J."/>
            <person name="Durkin A.S."/>
            <person name="Madupu R."/>
            <person name="Nelson W.C."/>
            <person name="Sullivan S.A."/>
            <person name="Fouts D.E."/>
            <person name="Haft D.H."/>
            <person name="Selengut J."/>
            <person name="Peterson J.D."/>
            <person name="Davidsen T.M."/>
            <person name="Zafar N."/>
            <person name="Zhou L."/>
            <person name="Radune D."/>
            <person name="Dimitrov G."/>
            <person name="Hance M."/>
            <person name="Tran K."/>
            <person name="Khouri H.M."/>
            <person name="Gill J."/>
            <person name="Utterback T.R."/>
            <person name="Feldblyum T.V."/>
            <person name="Wall J.D."/>
            <person name="Voordouw G."/>
            <person name="Fraser C.M."/>
        </authorList>
    </citation>
    <scope>NUCLEOTIDE SEQUENCE [LARGE SCALE GENOMIC DNA]</scope>
    <source>
        <strain>ATCC 29579 / DSM 644 / CCUG 34227 / NCIMB 8303 / VKM B-1760 / Hildenborough</strain>
    </source>
</reference>
<comment type="function">
    <text evidence="1">Catalyzes the attachment of threonine to tRNA(Thr) in a two-step reaction: L-threonine is first activated by ATP to form Thr-AMP and then transferred to the acceptor end of tRNA(Thr). Also edits incorrectly charged L-seryl-tRNA(Thr).</text>
</comment>
<comment type="catalytic activity">
    <reaction evidence="1">
        <text>tRNA(Thr) + L-threonine + ATP = L-threonyl-tRNA(Thr) + AMP + diphosphate + H(+)</text>
        <dbReference type="Rhea" id="RHEA:24624"/>
        <dbReference type="Rhea" id="RHEA-COMP:9670"/>
        <dbReference type="Rhea" id="RHEA-COMP:9704"/>
        <dbReference type="ChEBI" id="CHEBI:15378"/>
        <dbReference type="ChEBI" id="CHEBI:30616"/>
        <dbReference type="ChEBI" id="CHEBI:33019"/>
        <dbReference type="ChEBI" id="CHEBI:57926"/>
        <dbReference type="ChEBI" id="CHEBI:78442"/>
        <dbReference type="ChEBI" id="CHEBI:78534"/>
        <dbReference type="ChEBI" id="CHEBI:456215"/>
        <dbReference type="EC" id="6.1.1.3"/>
    </reaction>
</comment>
<comment type="cofactor">
    <cofactor evidence="1">
        <name>Zn(2+)</name>
        <dbReference type="ChEBI" id="CHEBI:29105"/>
    </cofactor>
    <text evidence="1">Binds 1 zinc ion per subunit.</text>
</comment>
<comment type="subunit">
    <text evidence="1">Homodimer.</text>
</comment>
<comment type="subcellular location">
    <subcellularLocation>
        <location evidence="1">Cytoplasm</location>
    </subcellularLocation>
</comment>
<comment type="similarity">
    <text evidence="1">Belongs to the class-II aminoacyl-tRNA synthetase family.</text>
</comment>
<organism>
    <name type="scientific">Nitratidesulfovibrio vulgaris (strain ATCC 29579 / DSM 644 / CCUG 34227 / NCIMB 8303 / VKM B-1760 / Hildenborough)</name>
    <name type="common">Desulfovibrio vulgaris</name>
    <dbReference type="NCBI Taxonomy" id="882"/>
    <lineage>
        <taxon>Bacteria</taxon>
        <taxon>Pseudomonadati</taxon>
        <taxon>Thermodesulfobacteriota</taxon>
        <taxon>Desulfovibrionia</taxon>
        <taxon>Desulfovibrionales</taxon>
        <taxon>Desulfovibrionaceae</taxon>
        <taxon>Nitratidesulfovibrio</taxon>
    </lineage>
</organism>